<organism>
    <name type="scientific">Shewanella baltica (strain OS185)</name>
    <dbReference type="NCBI Taxonomy" id="402882"/>
    <lineage>
        <taxon>Bacteria</taxon>
        <taxon>Pseudomonadati</taxon>
        <taxon>Pseudomonadota</taxon>
        <taxon>Gammaproteobacteria</taxon>
        <taxon>Alteromonadales</taxon>
        <taxon>Shewanellaceae</taxon>
        <taxon>Shewanella</taxon>
    </lineage>
</organism>
<keyword id="KW-0997">Cell inner membrane</keyword>
<keyword id="KW-1003">Cell membrane</keyword>
<keyword id="KW-0472">Membrane</keyword>
<dbReference type="EMBL" id="CP000753">
    <property type="protein sequence ID" value="ABS07576.1"/>
    <property type="molecule type" value="Genomic_DNA"/>
</dbReference>
<dbReference type="RefSeq" id="WP_012088717.1">
    <property type="nucleotide sequence ID" value="NC_009665.1"/>
</dbReference>
<dbReference type="SMR" id="A6WL87"/>
<dbReference type="KEGG" id="sbm:Shew185_1426"/>
<dbReference type="HOGENOM" id="CLU_121866_0_0_6"/>
<dbReference type="GO" id="GO:0009898">
    <property type="term" value="C:cytoplasmic side of plasma membrane"/>
    <property type="evidence" value="ECO:0007669"/>
    <property type="project" value="InterPro"/>
</dbReference>
<dbReference type="CDD" id="cd16323">
    <property type="entry name" value="Syd"/>
    <property type="match status" value="1"/>
</dbReference>
<dbReference type="Gene3D" id="3.40.1580.20">
    <property type="entry name" value="Syd protein"/>
    <property type="match status" value="1"/>
</dbReference>
<dbReference type="HAMAP" id="MF_01104">
    <property type="entry name" value="Syd"/>
    <property type="match status" value="1"/>
</dbReference>
<dbReference type="InterPro" id="IPR009948">
    <property type="entry name" value="Syd"/>
</dbReference>
<dbReference type="InterPro" id="IPR038228">
    <property type="entry name" value="Syd_sf"/>
</dbReference>
<dbReference type="NCBIfam" id="NF003439">
    <property type="entry name" value="PRK04968.1"/>
    <property type="match status" value="1"/>
</dbReference>
<dbReference type="Pfam" id="PF07348">
    <property type="entry name" value="Syd"/>
    <property type="match status" value="1"/>
</dbReference>
<protein>
    <recommendedName>
        <fullName evidence="1">Protein Syd</fullName>
    </recommendedName>
</protein>
<name>SYDP_SHEB8</name>
<comment type="function">
    <text evidence="1">Interacts with the SecY protein in vivo. May bind preferentially to an uncomplexed state of SecY, thus functioning either as a chelating agent for excess SecY in the cell or as a regulatory factor that negatively controls the translocase function.</text>
</comment>
<comment type="subcellular location">
    <subcellularLocation>
        <location evidence="1">Cell inner membrane</location>
        <topology evidence="1">Peripheral membrane protein</topology>
        <orientation evidence="1">Cytoplasmic side</orientation>
    </subcellularLocation>
    <text evidence="1">Loosely associated with the cytoplasmic side of the inner membrane, probably via SecY.</text>
</comment>
<comment type="similarity">
    <text evidence="1">Belongs to the Syd family.</text>
</comment>
<accession>A6WL87</accession>
<sequence length="216" mass="24632">MSCLPALDKFLQNYHQAYLTSLGELLRYYPQGEASVCIQGEFHADLDQAVSWQPVKREVEGSFANVEHALELTLWPEINHFYGQYFSAPLLFDSEWGTGELLQVWNEDDFTCLQQNLIGHLMMKKKLKQPPTWFIGLLDEGDKMLTINNSDGSVWIELPGEIPTQQLSPSLAEFIGALSPRIAPPVKHEELPMPALEHPGIFASFKRMWQNLFGKR</sequence>
<reference key="1">
    <citation type="submission" date="2007-07" db="EMBL/GenBank/DDBJ databases">
        <title>Complete sequence of chromosome of Shewanella baltica OS185.</title>
        <authorList>
            <consortium name="US DOE Joint Genome Institute"/>
            <person name="Copeland A."/>
            <person name="Lucas S."/>
            <person name="Lapidus A."/>
            <person name="Barry K."/>
            <person name="Glavina del Rio T."/>
            <person name="Dalin E."/>
            <person name="Tice H."/>
            <person name="Pitluck S."/>
            <person name="Sims D."/>
            <person name="Brettin T."/>
            <person name="Bruce D."/>
            <person name="Detter J.C."/>
            <person name="Han C."/>
            <person name="Schmutz J."/>
            <person name="Larimer F."/>
            <person name="Land M."/>
            <person name="Hauser L."/>
            <person name="Kyrpides N."/>
            <person name="Mikhailova N."/>
            <person name="Brettar I."/>
            <person name="Rodrigues J."/>
            <person name="Konstantinidis K."/>
            <person name="Tiedje J."/>
            <person name="Richardson P."/>
        </authorList>
    </citation>
    <scope>NUCLEOTIDE SEQUENCE [LARGE SCALE GENOMIC DNA]</scope>
    <source>
        <strain>OS185</strain>
    </source>
</reference>
<evidence type="ECO:0000255" key="1">
    <source>
        <dbReference type="HAMAP-Rule" id="MF_01104"/>
    </source>
</evidence>
<proteinExistence type="inferred from homology"/>
<gene>
    <name evidence="1" type="primary">syd</name>
    <name type="ordered locus">Shew185_1426</name>
</gene>
<feature type="chain" id="PRO_1000065044" description="Protein Syd">
    <location>
        <begin position="1"/>
        <end position="216"/>
    </location>
</feature>